<reference key="1">
    <citation type="journal article" date="2003" name="Nat. Genet.">
        <title>Comparative analysis of the genome sequences of Bordetella pertussis, Bordetella parapertussis and Bordetella bronchiseptica.</title>
        <authorList>
            <person name="Parkhill J."/>
            <person name="Sebaihia M."/>
            <person name="Preston A."/>
            <person name="Murphy L.D."/>
            <person name="Thomson N.R."/>
            <person name="Harris D.E."/>
            <person name="Holden M.T.G."/>
            <person name="Churcher C.M."/>
            <person name="Bentley S.D."/>
            <person name="Mungall K.L."/>
            <person name="Cerdeno-Tarraga A.-M."/>
            <person name="Temple L."/>
            <person name="James K.D."/>
            <person name="Harris B."/>
            <person name="Quail M.A."/>
            <person name="Achtman M."/>
            <person name="Atkin R."/>
            <person name="Baker S."/>
            <person name="Basham D."/>
            <person name="Bason N."/>
            <person name="Cherevach I."/>
            <person name="Chillingworth T."/>
            <person name="Collins M."/>
            <person name="Cronin A."/>
            <person name="Davis P."/>
            <person name="Doggett J."/>
            <person name="Feltwell T."/>
            <person name="Goble A."/>
            <person name="Hamlin N."/>
            <person name="Hauser H."/>
            <person name="Holroyd S."/>
            <person name="Jagels K."/>
            <person name="Leather S."/>
            <person name="Moule S."/>
            <person name="Norberczak H."/>
            <person name="O'Neil S."/>
            <person name="Ormond D."/>
            <person name="Price C."/>
            <person name="Rabbinowitsch E."/>
            <person name="Rutter S."/>
            <person name="Sanders M."/>
            <person name="Saunders D."/>
            <person name="Seeger K."/>
            <person name="Sharp S."/>
            <person name="Simmonds M."/>
            <person name="Skelton J."/>
            <person name="Squares R."/>
            <person name="Squares S."/>
            <person name="Stevens K."/>
            <person name="Unwin L."/>
            <person name="Whitehead S."/>
            <person name="Barrell B.G."/>
            <person name="Maskell D.J."/>
        </authorList>
    </citation>
    <scope>NUCLEOTIDE SEQUENCE [LARGE SCALE GENOMIC DNA]</scope>
    <source>
        <strain>Tohama I / ATCC BAA-589 / NCTC 13251</strain>
    </source>
</reference>
<name>RF2_BORPE</name>
<proteinExistence type="inferred from homology"/>
<feature type="chain" id="PRO_1000004975" description="Peptide chain release factor 2">
    <location>
        <begin position="1"/>
        <end position="367"/>
    </location>
</feature>
<feature type="modified residue" description="N5-methylglutamine" evidence="2">
    <location>
        <position position="254"/>
    </location>
</feature>
<evidence type="ECO:0000250" key="1"/>
<evidence type="ECO:0000255" key="2">
    <source>
        <dbReference type="HAMAP-Rule" id="MF_00094"/>
    </source>
</evidence>
<dbReference type="EMBL" id="BX640414">
    <property type="protein sequence ID" value="CAE41402.1"/>
    <property type="molecule type" value="Genomic_DNA"/>
</dbReference>
<dbReference type="RefSeq" id="NP_879885.1">
    <property type="nucleotide sequence ID" value="NC_002929.2"/>
</dbReference>
<dbReference type="RefSeq" id="WP_010926448.1">
    <property type="nucleotide sequence ID" value="NZ_CP039022.1"/>
</dbReference>
<dbReference type="SMR" id="Q7VZ35"/>
<dbReference type="STRING" id="257313.BP1104"/>
<dbReference type="PaxDb" id="257313-BP1104"/>
<dbReference type="GeneID" id="69601026"/>
<dbReference type="KEGG" id="bpe:BP1104"/>
<dbReference type="PATRIC" id="fig|257313.5.peg.1182"/>
<dbReference type="eggNOG" id="COG1186">
    <property type="taxonomic scope" value="Bacteria"/>
</dbReference>
<dbReference type="HOGENOM" id="CLU_220733_0_1_4"/>
<dbReference type="Proteomes" id="UP000002676">
    <property type="component" value="Chromosome"/>
</dbReference>
<dbReference type="GO" id="GO:0005737">
    <property type="term" value="C:cytoplasm"/>
    <property type="evidence" value="ECO:0007669"/>
    <property type="project" value="UniProtKB-SubCell"/>
</dbReference>
<dbReference type="GO" id="GO:0016149">
    <property type="term" value="F:translation release factor activity, codon specific"/>
    <property type="evidence" value="ECO:0007669"/>
    <property type="project" value="UniProtKB-UniRule"/>
</dbReference>
<dbReference type="GO" id="GO:0075523">
    <property type="term" value="P:viral translational frameshifting"/>
    <property type="evidence" value="ECO:0007669"/>
    <property type="project" value="UniProtKB-KW"/>
</dbReference>
<dbReference type="FunFam" id="3.30.160.20:FF:000010">
    <property type="entry name" value="Peptide chain release factor 2"/>
    <property type="match status" value="1"/>
</dbReference>
<dbReference type="Gene3D" id="3.30.160.20">
    <property type="match status" value="1"/>
</dbReference>
<dbReference type="Gene3D" id="3.30.70.1660">
    <property type="match status" value="1"/>
</dbReference>
<dbReference type="Gene3D" id="1.20.58.410">
    <property type="entry name" value="Release factor"/>
    <property type="match status" value="1"/>
</dbReference>
<dbReference type="HAMAP" id="MF_00094">
    <property type="entry name" value="Rel_fac_2"/>
    <property type="match status" value="1"/>
</dbReference>
<dbReference type="InterPro" id="IPR005139">
    <property type="entry name" value="PCRF"/>
</dbReference>
<dbReference type="InterPro" id="IPR000352">
    <property type="entry name" value="Pep_chain_release_fac_I"/>
</dbReference>
<dbReference type="InterPro" id="IPR045853">
    <property type="entry name" value="Pep_chain_release_fac_I_sf"/>
</dbReference>
<dbReference type="InterPro" id="IPR004374">
    <property type="entry name" value="PrfB"/>
</dbReference>
<dbReference type="NCBIfam" id="TIGR00020">
    <property type="entry name" value="prfB"/>
    <property type="match status" value="1"/>
</dbReference>
<dbReference type="PANTHER" id="PTHR43116:SF3">
    <property type="entry name" value="CLASS I PEPTIDE CHAIN RELEASE FACTOR"/>
    <property type="match status" value="1"/>
</dbReference>
<dbReference type="PANTHER" id="PTHR43116">
    <property type="entry name" value="PEPTIDE CHAIN RELEASE FACTOR 2"/>
    <property type="match status" value="1"/>
</dbReference>
<dbReference type="Pfam" id="PF03462">
    <property type="entry name" value="PCRF"/>
    <property type="match status" value="1"/>
</dbReference>
<dbReference type="Pfam" id="PF00472">
    <property type="entry name" value="RF-1"/>
    <property type="match status" value="1"/>
</dbReference>
<dbReference type="SMART" id="SM00937">
    <property type="entry name" value="PCRF"/>
    <property type="match status" value="1"/>
</dbReference>
<dbReference type="SUPFAM" id="SSF75620">
    <property type="entry name" value="Release factor"/>
    <property type="match status" value="1"/>
</dbReference>
<dbReference type="PROSITE" id="PS00745">
    <property type="entry name" value="RF_PROK_I"/>
    <property type="match status" value="1"/>
</dbReference>
<accession>Q7VZ35</accession>
<sequence length="367" mass="41465">MEAERQNQLVARLEDYAEREQALRRYLDYDAKSERLQVVNAELEDPAIWNDPKHAQDLGREKKSLEDVVETLTELGSGLADSCELVELALADSDDATLEAIEHDADRFQEKLETLEFRRMFANPADPLNCFVDIQAGAGGTEAQDWASMLLRQYLKYAERKGFKAEILEESEGDVAGLKSATIKIEGEYAFGYLRTETGVHRLVRKSPFDSSGGRHTSFASVFVYPEVDESFEVEVNPADLRIDTYRASGAGGQHINKTDSAVRITHAPSGIVVQCQNDRSQHRNRAEAMQMLKSKLYELEMRNRMTEQQKLEDSKTDVGWGHQIRSYVLDQSRIKDLRTNVEISNTQKVLDGDLDPFIQASLKQGV</sequence>
<gene>
    <name evidence="2" type="primary">prfB</name>
    <name type="ordered locus">BP1104</name>
</gene>
<organism>
    <name type="scientific">Bordetella pertussis (strain Tohama I / ATCC BAA-589 / NCTC 13251)</name>
    <dbReference type="NCBI Taxonomy" id="257313"/>
    <lineage>
        <taxon>Bacteria</taxon>
        <taxon>Pseudomonadati</taxon>
        <taxon>Pseudomonadota</taxon>
        <taxon>Betaproteobacteria</taxon>
        <taxon>Burkholderiales</taxon>
        <taxon>Alcaligenaceae</taxon>
        <taxon>Bordetella</taxon>
    </lineage>
</organism>
<keyword id="KW-0963">Cytoplasm</keyword>
<keyword id="KW-0488">Methylation</keyword>
<keyword id="KW-0648">Protein biosynthesis</keyword>
<keyword id="KW-1185">Reference proteome</keyword>
<keyword id="KW-0688">Ribosomal frameshifting</keyword>
<comment type="function">
    <text evidence="2">Peptide chain release factor 2 directs the termination of translation in response to the peptide chain termination codons UGA and UAA.</text>
</comment>
<comment type="subcellular location">
    <subcellularLocation>
        <location evidence="2">Cytoplasm</location>
    </subcellularLocation>
</comment>
<comment type="PTM">
    <text evidence="2">Methylated by PrmC. Methylation increases the termination efficiency of RF2.</text>
</comment>
<comment type="miscellaneous">
    <text evidence="1">The gene for this protein contains a UGA in-frame termination codon after Leu-27; a naturally occurring frameshift enables complete translation of RF-2. This provides a mechanism for the protein to regulate its own production (By similarity).</text>
</comment>
<comment type="similarity">
    <text evidence="2">Belongs to the prokaryotic/mitochondrial release factor family.</text>
</comment>
<protein>
    <recommendedName>
        <fullName evidence="2">Peptide chain release factor 2</fullName>
        <shortName evidence="2">RF-2</shortName>
    </recommendedName>
</protein>